<comment type="function">
    <text evidence="1">Binds 23S rRNA and is also seen to make contacts with the A and possibly P site tRNAs.</text>
</comment>
<comment type="subunit">
    <text evidence="1">Part of the 50S ribosomal subunit.</text>
</comment>
<comment type="similarity">
    <text evidence="1">Belongs to the universal ribosomal protein uL16 family.</text>
</comment>
<feature type="chain" id="PRO_0000062052" description="Large ribosomal subunit protein uL16">
    <location>
        <begin position="1"/>
        <end position="133"/>
    </location>
</feature>
<dbReference type="EMBL" id="BX248583">
    <property type="protein sequence ID" value="CAD83713.1"/>
    <property type="molecule type" value="Genomic_DNA"/>
</dbReference>
<dbReference type="SMR" id="Q7VQE1"/>
<dbReference type="STRING" id="203907.Bfl198"/>
<dbReference type="KEGG" id="bfl:Bfl198"/>
<dbReference type="eggNOG" id="COG0197">
    <property type="taxonomic scope" value="Bacteria"/>
</dbReference>
<dbReference type="HOGENOM" id="CLU_078858_2_1_6"/>
<dbReference type="OrthoDB" id="9802589at2"/>
<dbReference type="Proteomes" id="UP000002192">
    <property type="component" value="Chromosome"/>
</dbReference>
<dbReference type="GO" id="GO:0022625">
    <property type="term" value="C:cytosolic large ribosomal subunit"/>
    <property type="evidence" value="ECO:0007669"/>
    <property type="project" value="TreeGrafter"/>
</dbReference>
<dbReference type="GO" id="GO:0019843">
    <property type="term" value="F:rRNA binding"/>
    <property type="evidence" value="ECO:0007669"/>
    <property type="project" value="UniProtKB-UniRule"/>
</dbReference>
<dbReference type="GO" id="GO:0003735">
    <property type="term" value="F:structural constituent of ribosome"/>
    <property type="evidence" value="ECO:0007669"/>
    <property type="project" value="InterPro"/>
</dbReference>
<dbReference type="GO" id="GO:0000049">
    <property type="term" value="F:tRNA binding"/>
    <property type="evidence" value="ECO:0007669"/>
    <property type="project" value="UniProtKB-KW"/>
</dbReference>
<dbReference type="GO" id="GO:0006412">
    <property type="term" value="P:translation"/>
    <property type="evidence" value="ECO:0007669"/>
    <property type="project" value="UniProtKB-UniRule"/>
</dbReference>
<dbReference type="CDD" id="cd01433">
    <property type="entry name" value="Ribosomal_L16_L10e"/>
    <property type="match status" value="1"/>
</dbReference>
<dbReference type="FunFam" id="3.90.1170.10:FF:000001">
    <property type="entry name" value="50S ribosomal protein L16"/>
    <property type="match status" value="1"/>
</dbReference>
<dbReference type="Gene3D" id="3.90.1170.10">
    <property type="entry name" value="Ribosomal protein L10e/L16"/>
    <property type="match status" value="1"/>
</dbReference>
<dbReference type="HAMAP" id="MF_01342">
    <property type="entry name" value="Ribosomal_uL16"/>
    <property type="match status" value="1"/>
</dbReference>
<dbReference type="InterPro" id="IPR047873">
    <property type="entry name" value="Ribosomal_uL16"/>
</dbReference>
<dbReference type="InterPro" id="IPR000114">
    <property type="entry name" value="Ribosomal_uL16_bact-type"/>
</dbReference>
<dbReference type="InterPro" id="IPR020798">
    <property type="entry name" value="Ribosomal_uL16_CS"/>
</dbReference>
<dbReference type="InterPro" id="IPR016180">
    <property type="entry name" value="Ribosomal_uL16_dom"/>
</dbReference>
<dbReference type="InterPro" id="IPR036920">
    <property type="entry name" value="Ribosomal_uL16_sf"/>
</dbReference>
<dbReference type="NCBIfam" id="TIGR01164">
    <property type="entry name" value="rplP_bact"/>
    <property type="match status" value="1"/>
</dbReference>
<dbReference type="PANTHER" id="PTHR12220">
    <property type="entry name" value="50S/60S RIBOSOMAL PROTEIN L16"/>
    <property type="match status" value="1"/>
</dbReference>
<dbReference type="PANTHER" id="PTHR12220:SF13">
    <property type="entry name" value="LARGE RIBOSOMAL SUBUNIT PROTEIN UL16M"/>
    <property type="match status" value="1"/>
</dbReference>
<dbReference type="Pfam" id="PF00252">
    <property type="entry name" value="Ribosomal_L16"/>
    <property type="match status" value="1"/>
</dbReference>
<dbReference type="PRINTS" id="PR00060">
    <property type="entry name" value="RIBOSOMALL16"/>
</dbReference>
<dbReference type="SUPFAM" id="SSF54686">
    <property type="entry name" value="Ribosomal protein L16p/L10e"/>
    <property type="match status" value="1"/>
</dbReference>
<dbReference type="PROSITE" id="PS00586">
    <property type="entry name" value="RIBOSOMAL_L16_1"/>
    <property type="match status" value="1"/>
</dbReference>
<dbReference type="PROSITE" id="PS00701">
    <property type="entry name" value="RIBOSOMAL_L16_2"/>
    <property type="match status" value="1"/>
</dbReference>
<reference key="1">
    <citation type="journal article" date="2003" name="Proc. Natl. Acad. Sci. U.S.A.">
        <title>The genome sequence of Blochmannia floridanus: comparative analysis of reduced genomes.</title>
        <authorList>
            <person name="Gil R."/>
            <person name="Silva F.J."/>
            <person name="Zientz E."/>
            <person name="Delmotte F."/>
            <person name="Gonzalez-Candelas F."/>
            <person name="Latorre A."/>
            <person name="Rausell C."/>
            <person name="Kamerbeek J."/>
            <person name="Gadau J."/>
            <person name="Hoelldobler B."/>
            <person name="van Ham R.C.H.J."/>
            <person name="Gross R."/>
            <person name="Moya A."/>
        </authorList>
    </citation>
    <scope>NUCLEOTIDE SEQUENCE [LARGE SCALE GENOMIC DNA]</scope>
</reference>
<proteinExistence type="inferred from homology"/>
<gene>
    <name evidence="1" type="primary">rplP</name>
    <name type="ordered locus">Bfl198</name>
</gene>
<name>RL16_BLOFL</name>
<accession>Q7VQE1</accession>
<organism>
    <name type="scientific">Blochmanniella floridana</name>
    <dbReference type="NCBI Taxonomy" id="203907"/>
    <lineage>
        <taxon>Bacteria</taxon>
        <taxon>Pseudomonadati</taxon>
        <taxon>Pseudomonadota</taxon>
        <taxon>Gammaproteobacteria</taxon>
        <taxon>Enterobacterales</taxon>
        <taxon>Enterobacteriaceae</taxon>
        <taxon>ant endosymbionts</taxon>
        <taxon>Candidatus Blochmanniella</taxon>
    </lineage>
</organism>
<evidence type="ECO:0000255" key="1">
    <source>
        <dbReference type="HAMAP-Rule" id="MF_01342"/>
    </source>
</evidence>
<evidence type="ECO:0000305" key="2"/>
<sequence length="133" mass="15088">MLQPKRTKFRKMHKGRNRGIVVNDKINFGTFALKSVDRGRLKSCQIESARRAITRAIKRQGKVWIRIFPDKPITQKPLEVRMGKGKGNVEYWVALVQPGKILYEMSGVSKELADHAFKLGSSKLPVRTVVTGI</sequence>
<protein>
    <recommendedName>
        <fullName evidence="1">Large ribosomal subunit protein uL16</fullName>
    </recommendedName>
    <alternativeName>
        <fullName evidence="2">50S ribosomal protein L16</fullName>
    </alternativeName>
</protein>
<keyword id="KW-1185">Reference proteome</keyword>
<keyword id="KW-0687">Ribonucleoprotein</keyword>
<keyword id="KW-0689">Ribosomal protein</keyword>
<keyword id="KW-0694">RNA-binding</keyword>
<keyword id="KW-0699">rRNA-binding</keyword>
<keyword id="KW-0820">tRNA-binding</keyword>